<proteinExistence type="inferred from homology"/>
<comment type="function">
    <text evidence="1">Nucleotidyltransferase involved in the post-translational modification of proteins. It can catalyze the addition of adenosine monophosphate (AMP) or uridine monophosphate (UMP) to a protein, resulting in modifications known as AMPylation and UMPylation.</text>
</comment>
<comment type="catalytic activity">
    <reaction evidence="1">
        <text>L-seryl-[protein] + ATP = 3-O-(5'-adenylyl)-L-seryl-[protein] + diphosphate</text>
        <dbReference type="Rhea" id="RHEA:58120"/>
        <dbReference type="Rhea" id="RHEA-COMP:9863"/>
        <dbReference type="Rhea" id="RHEA-COMP:15073"/>
        <dbReference type="ChEBI" id="CHEBI:29999"/>
        <dbReference type="ChEBI" id="CHEBI:30616"/>
        <dbReference type="ChEBI" id="CHEBI:33019"/>
        <dbReference type="ChEBI" id="CHEBI:142516"/>
        <dbReference type="EC" id="2.7.7.108"/>
    </reaction>
</comment>
<comment type="catalytic activity">
    <reaction evidence="1">
        <text>L-threonyl-[protein] + ATP = 3-O-(5'-adenylyl)-L-threonyl-[protein] + diphosphate</text>
        <dbReference type="Rhea" id="RHEA:54292"/>
        <dbReference type="Rhea" id="RHEA-COMP:11060"/>
        <dbReference type="Rhea" id="RHEA-COMP:13847"/>
        <dbReference type="ChEBI" id="CHEBI:30013"/>
        <dbReference type="ChEBI" id="CHEBI:30616"/>
        <dbReference type="ChEBI" id="CHEBI:33019"/>
        <dbReference type="ChEBI" id="CHEBI:138113"/>
        <dbReference type="EC" id="2.7.7.108"/>
    </reaction>
</comment>
<comment type="catalytic activity">
    <reaction evidence="1">
        <text>L-tyrosyl-[protein] + ATP = O-(5'-adenylyl)-L-tyrosyl-[protein] + diphosphate</text>
        <dbReference type="Rhea" id="RHEA:54288"/>
        <dbReference type="Rhea" id="RHEA-COMP:10136"/>
        <dbReference type="Rhea" id="RHEA-COMP:13846"/>
        <dbReference type="ChEBI" id="CHEBI:30616"/>
        <dbReference type="ChEBI" id="CHEBI:33019"/>
        <dbReference type="ChEBI" id="CHEBI:46858"/>
        <dbReference type="ChEBI" id="CHEBI:83624"/>
        <dbReference type="EC" id="2.7.7.108"/>
    </reaction>
</comment>
<comment type="catalytic activity">
    <reaction evidence="1">
        <text>L-histidyl-[protein] + UTP = N(tele)-(5'-uridylyl)-L-histidyl-[protein] + diphosphate</text>
        <dbReference type="Rhea" id="RHEA:83891"/>
        <dbReference type="Rhea" id="RHEA-COMP:9745"/>
        <dbReference type="Rhea" id="RHEA-COMP:20239"/>
        <dbReference type="ChEBI" id="CHEBI:29979"/>
        <dbReference type="ChEBI" id="CHEBI:33019"/>
        <dbReference type="ChEBI" id="CHEBI:46398"/>
        <dbReference type="ChEBI" id="CHEBI:233474"/>
    </reaction>
</comment>
<comment type="catalytic activity">
    <reaction evidence="1">
        <text>L-seryl-[protein] + UTP = O-(5'-uridylyl)-L-seryl-[protein] + diphosphate</text>
        <dbReference type="Rhea" id="RHEA:64604"/>
        <dbReference type="Rhea" id="RHEA-COMP:9863"/>
        <dbReference type="Rhea" id="RHEA-COMP:16635"/>
        <dbReference type="ChEBI" id="CHEBI:29999"/>
        <dbReference type="ChEBI" id="CHEBI:33019"/>
        <dbReference type="ChEBI" id="CHEBI:46398"/>
        <dbReference type="ChEBI" id="CHEBI:156051"/>
    </reaction>
</comment>
<comment type="catalytic activity">
    <reaction evidence="1">
        <text>L-tyrosyl-[protein] + UTP = O-(5'-uridylyl)-L-tyrosyl-[protein] + diphosphate</text>
        <dbReference type="Rhea" id="RHEA:83887"/>
        <dbReference type="Rhea" id="RHEA-COMP:10136"/>
        <dbReference type="Rhea" id="RHEA-COMP:20238"/>
        <dbReference type="ChEBI" id="CHEBI:33019"/>
        <dbReference type="ChEBI" id="CHEBI:46398"/>
        <dbReference type="ChEBI" id="CHEBI:46858"/>
        <dbReference type="ChEBI" id="CHEBI:90602"/>
    </reaction>
</comment>
<comment type="cofactor">
    <cofactor evidence="1">
        <name>Mg(2+)</name>
        <dbReference type="ChEBI" id="CHEBI:18420"/>
    </cofactor>
    <cofactor evidence="1">
        <name>Mn(2+)</name>
        <dbReference type="ChEBI" id="CHEBI:29035"/>
    </cofactor>
</comment>
<comment type="similarity">
    <text evidence="1">Belongs to the SELO family.</text>
</comment>
<organism>
    <name type="scientific">Klebsiella pneumoniae (strain 342)</name>
    <dbReference type="NCBI Taxonomy" id="507522"/>
    <lineage>
        <taxon>Bacteria</taxon>
        <taxon>Pseudomonadati</taxon>
        <taxon>Pseudomonadota</taxon>
        <taxon>Gammaproteobacteria</taxon>
        <taxon>Enterobacterales</taxon>
        <taxon>Enterobacteriaceae</taxon>
        <taxon>Klebsiella/Raoultella group</taxon>
        <taxon>Klebsiella</taxon>
        <taxon>Klebsiella pneumoniae complex</taxon>
    </lineage>
</organism>
<reference key="1">
    <citation type="journal article" date="2008" name="PLoS Genet.">
        <title>Complete genome sequence of the N2-fixing broad host range endophyte Klebsiella pneumoniae 342 and virulence predictions verified in mice.</title>
        <authorList>
            <person name="Fouts D.E."/>
            <person name="Tyler H.L."/>
            <person name="DeBoy R.T."/>
            <person name="Daugherty S."/>
            <person name="Ren Q."/>
            <person name="Badger J.H."/>
            <person name="Durkin A.S."/>
            <person name="Huot H."/>
            <person name="Shrivastava S."/>
            <person name="Kothari S."/>
            <person name="Dodson R.J."/>
            <person name="Mohamoud Y."/>
            <person name="Khouri H."/>
            <person name="Roesch L.F.W."/>
            <person name="Krogfelt K.A."/>
            <person name="Struve C."/>
            <person name="Triplett E.W."/>
            <person name="Methe B.A."/>
        </authorList>
    </citation>
    <scope>NUCLEOTIDE SEQUENCE [LARGE SCALE GENOMIC DNA]</scope>
    <source>
        <strain>342</strain>
    </source>
</reference>
<gene>
    <name evidence="1" type="primary">ydiU</name>
    <name evidence="1" type="synonym">selO</name>
    <name type="ordered locus">KPK_2154</name>
</gene>
<evidence type="ECO:0000255" key="1">
    <source>
        <dbReference type="HAMAP-Rule" id="MF_00692"/>
    </source>
</evidence>
<keyword id="KW-0067">ATP-binding</keyword>
<keyword id="KW-0460">Magnesium</keyword>
<keyword id="KW-0464">Manganese</keyword>
<keyword id="KW-0479">Metal-binding</keyword>
<keyword id="KW-0547">Nucleotide-binding</keyword>
<keyword id="KW-0548">Nucleotidyltransferase</keyword>
<keyword id="KW-0808">Transferase</keyword>
<protein>
    <recommendedName>
        <fullName evidence="1">Protein nucleotidyltransferase YdiU</fullName>
        <ecNumber evidence="1">2.7.7.-</ecNumber>
    </recommendedName>
    <alternativeName>
        <fullName evidence="1">Protein adenylyltransferase YdiU</fullName>
        <ecNumber evidence="1">2.7.7.108</ecNumber>
    </alternativeName>
    <alternativeName>
        <fullName evidence="1">Protein uridylyltransferase YdiU</fullName>
        <ecNumber evidence="1">2.7.7.-</ecNumber>
    </alternativeName>
</protein>
<feature type="chain" id="PRO_1000132113" description="Protein nucleotidyltransferase YdiU">
    <location>
        <begin position="1"/>
        <end position="480"/>
    </location>
</feature>
<feature type="active site" description="Proton acceptor" evidence="1">
    <location>
        <position position="248"/>
    </location>
</feature>
<feature type="binding site" evidence="1">
    <location>
        <position position="86"/>
    </location>
    <ligand>
        <name>ATP</name>
        <dbReference type="ChEBI" id="CHEBI:30616"/>
    </ligand>
</feature>
<feature type="binding site" evidence="1">
    <location>
        <position position="88"/>
    </location>
    <ligand>
        <name>ATP</name>
        <dbReference type="ChEBI" id="CHEBI:30616"/>
    </ligand>
</feature>
<feature type="binding site" evidence="1">
    <location>
        <position position="89"/>
    </location>
    <ligand>
        <name>ATP</name>
        <dbReference type="ChEBI" id="CHEBI:30616"/>
    </ligand>
</feature>
<feature type="binding site" evidence="1">
    <location>
        <position position="109"/>
    </location>
    <ligand>
        <name>ATP</name>
        <dbReference type="ChEBI" id="CHEBI:30616"/>
    </ligand>
</feature>
<feature type="binding site" evidence="1">
    <location>
        <position position="121"/>
    </location>
    <ligand>
        <name>ATP</name>
        <dbReference type="ChEBI" id="CHEBI:30616"/>
    </ligand>
</feature>
<feature type="binding site" evidence="1">
    <location>
        <position position="122"/>
    </location>
    <ligand>
        <name>ATP</name>
        <dbReference type="ChEBI" id="CHEBI:30616"/>
    </ligand>
</feature>
<feature type="binding site" evidence="1">
    <location>
        <position position="172"/>
    </location>
    <ligand>
        <name>ATP</name>
        <dbReference type="ChEBI" id="CHEBI:30616"/>
    </ligand>
</feature>
<feature type="binding site" evidence="1">
    <location>
        <position position="179"/>
    </location>
    <ligand>
        <name>ATP</name>
        <dbReference type="ChEBI" id="CHEBI:30616"/>
    </ligand>
</feature>
<feature type="binding site" evidence="1">
    <location>
        <position position="249"/>
    </location>
    <ligand>
        <name>Mg(2+)</name>
        <dbReference type="ChEBI" id="CHEBI:18420"/>
    </ligand>
</feature>
<feature type="binding site" evidence="1">
    <location>
        <position position="258"/>
    </location>
    <ligand>
        <name>ATP</name>
        <dbReference type="ChEBI" id="CHEBI:30616"/>
    </ligand>
</feature>
<feature type="binding site" evidence="1">
    <location>
        <position position="258"/>
    </location>
    <ligand>
        <name>Mg(2+)</name>
        <dbReference type="ChEBI" id="CHEBI:18420"/>
    </ligand>
</feature>
<name>SELO_KLEP3</name>
<sequence>MTLSFTTHWRDELPDFYTSLLPTPLDNARLIWRNAPLAQQLGVPDALFAPENGAGVWGGEALLPGMSPLAQVYSGHQFGAWAGQLGDGRGILLGEQQLADGRRYDWHLKGAGLTPYSRMGDGRAVLRSTIRESLASEAMHALGIPTTRALAMVTSDTPIYRERVEPGAMLMRVAESHVRFGHFEHFYYRREPQKVQQLADYVIRHHWPQLQDEADKYLLWFRDVVTRTAQTIASWQTVGFAHGVMNTDNMSILGLTIDYGPYGFLDDFQPDFICNHSDYQGRYSFENQPAVGLWNLQRLAQSLSPFISAEALNAALDEYQHALLTAYGQRMRDKLGLFSQQKGDNDLLDGLFALMIREKSDYTRTFRLLSHSEQLSAASPLRDEFIDRAAFDSWFAGYRARLRDEQVDDAQRQQRMQGVNPALVLRNWLAQRAIEQAEAGDMGELERLHAALADPFTDREDDYVRRPPDWGKRLEVSCSS</sequence>
<dbReference type="EC" id="2.7.7.-" evidence="1"/>
<dbReference type="EC" id="2.7.7.108" evidence="1"/>
<dbReference type="EMBL" id="CP000964">
    <property type="protein sequence ID" value="ACI10253.1"/>
    <property type="molecule type" value="Genomic_DNA"/>
</dbReference>
<dbReference type="SMR" id="B5XQE2"/>
<dbReference type="KEGG" id="kpe:KPK_2154"/>
<dbReference type="HOGENOM" id="CLU_010245_4_0_6"/>
<dbReference type="BioCyc" id="KPNE507522:GI0B-2148-MONOMER"/>
<dbReference type="Proteomes" id="UP000001734">
    <property type="component" value="Chromosome"/>
</dbReference>
<dbReference type="GO" id="GO:0070733">
    <property type="term" value="F:AMPylase activity"/>
    <property type="evidence" value="ECO:0007669"/>
    <property type="project" value="RHEA"/>
</dbReference>
<dbReference type="GO" id="GO:0005524">
    <property type="term" value="F:ATP binding"/>
    <property type="evidence" value="ECO:0007669"/>
    <property type="project" value="UniProtKB-UniRule"/>
</dbReference>
<dbReference type="GO" id="GO:0000287">
    <property type="term" value="F:magnesium ion binding"/>
    <property type="evidence" value="ECO:0007669"/>
    <property type="project" value="UniProtKB-UniRule"/>
</dbReference>
<dbReference type="HAMAP" id="MF_00692">
    <property type="entry name" value="YdiU_SelO"/>
    <property type="match status" value="1"/>
</dbReference>
<dbReference type="InterPro" id="IPR054838">
    <property type="entry name" value="adnlytase_SelO"/>
</dbReference>
<dbReference type="InterPro" id="IPR003846">
    <property type="entry name" value="SelO"/>
</dbReference>
<dbReference type="NCBIfam" id="NF040880">
    <property type="entry name" value="adnlytase_SelO"/>
    <property type="match status" value="1"/>
</dbReference>
<dbReference type="NCBIfam" id="NF000658">
    <property type="entry name" value="PRK00029.1"/>
    <property type="match status" value="1"/>
</dbReference>
<dbReference type="PANTHER" id="PTHR32057">
    <property type="entry name" value="PROTEIN ADENYLYLTRANSFERASE SELO, MITOCHONDRIAL"/>
    <property type="match status" value="1"/>
</dbReference>
<dbReference type="PANTHER" id="PTHR32057:SF14">
    <property type="entry name" value="PROTEIN ADENYLYLTRANSFERASE SELO, MITOCHONDRIAL"/>
    <property type="match status" value="1"/>
</dbReference>
<dbReference type="Pfam" id="PF02696">
    <property type="entry name" value="SelO"/>
    <property type="match status" value="1"/>
</dbReference>
<accession>B5XQE2</accession>